<evidence type="ECO:0000255" key="1">
    <source>
        <dbReference type="HAMAP-Rule" id="MF_00150"/>
    </source>
</evidence>
<evidence type="ECO:0000305" key="2"/>
<name>ARGC_NOSEL</name>
<comment type="function">
    <text evidence="1">Catalyzes the NADPH-dependent reduction of N-acetyl-5-glutamyl phosphate to yield N-acetyl-L-glutamate 5-semialdehyde.</text>
</comment>
<comment type="catalytic activity">
    <reaction evidence="1">
        <text>N-acetyl-L-glutamate 5-semialdehyde + phosphate + NADP(+) = N-acetyl-L-glutamyl 5-phosphate + NADPH + H(+)</text>
        <dbReference type="Rhea" id="RHEA:21588"/>
        <dbReference type="ChEBI" id="CHEBI:15378"/>
        <dbReference type="ChEBI" id="CHEBI:29123"/>
        <dbReference type="ChEBI" id="CHEBI:43474"/>
        <dbReference type="ChEBI" id="CHEBI:57783"/>
        <dbReference type="ChEBI" id="CHEBI:57936"/>
        <dbReference type="ChEBI" id="CHEBI:58349"/>
        <dbReference type="EC" id="1.2.1.38"/>
    </reaction>
</comment>
<comment type="pathway">
    <text evidence="1">Amino-acid biosynthesis; L-arginine biosynthesis; N(2)-acetyl-L-ornithine from L-glutamate: step 3/4.</text>
</comment>
<comment type="subcellular location">
    <subcellularLocation>
        <location evidence="1">Cytoplasm</location>
    </subcellularLocation>
</comment>
<comment type="similarity">
    <text evidence="1">Belongs to the NAGSA dehydrogenase family. Type 1 subfamily.</text>
</comment>
<comment type="caution">
    <text evidence="2">Ser-155 is present instead of the conserved Cys which is expected to be an active site residue.</text>
</comment>
<gene>
    <name evidence="1" type="primary">argC</name>
    <name type="synonym">argL</name>
</gene>
<reference key="1">
    <citation type="journal article" date="1998" name="Microbiology">
        <title>A transposition-induced mutant of Nostoc ellipsosporum implicates an arginine-biosynthetic gene in the formation of cyanophycin granules and of functional heterocysts and akinetes.</title>
        <authorList>
            <person name="Leganes F."/>
            <person name="Fernandez-Pinas F."/>
            <person name="Wolk C.P."/>
        </authorList>
    </citation>
    <scope>NUCLEOTIDE SEQUENCE [GENOMIC DNA]</scope>
    <source>
        <strain>B1453-7 / CPB311</strain>
    </source>
</reference>
<proteinExistence type="inferred from homology"/>
<feature type="chain" id="PRO_0000112430" description="N-acetyl-gamma-glutamyl-phosphate reductase">
    <location>
        <begin position="1"/>
        <end position="352"/>
    </location>
</feature>
<organism>
    <name type="scientific">Nostoc ellipsosporum</name>
    <dbReference type="NCBI Taxonomy" id="45916"/>
    <lineage>
        <taxon>Bacteria</taxon>
        <taxon>Bacillati</taxon>
        <taxon>Cyanobacteriota</taxon>
        <taxon>Cyanophyceae</taxon>
        <taxon>Nostocales</taxon>
        <taxon>Nostocaceae</taxon>
        <taxon>Nostoc</taxon>
    </lineage>
</organism>
<keyword id="KW-0028">Amino-acid biosynthesis</keyword>
<keyword id="KW-0055">Arginine biosynthesis</keyword>
<keyword id="KW-0963">Cytoplasm</keyword>
<keyword id="KW-0521">NADP</keyword>
<keyword id="KW-0560">Oxidoreductase</keyword>
<protein>
    <recommendedName>
        <fullName evidence="1">N-acetyl-gamma-glutamyl-phosphate reductase</fullName>
        <shortName evidence="1">AGPR</shortName>
        <ecNumber evidence="1">1.2.1.38</ecNumber>
    </recommendedName>
    <alternativeName>
        <fullName evidence="1">N-acetyl-glutamate semialdehyde dehydrogenase</fullName>
        <shortName evidence="1">NAGSA dehydrogenase</shortName>
    </alternativeName>
</protein>
<accession>O87890</accession>
<sequence length="352" mass="38197">MGNFGRVPVGIVGASGYGGVQLVRLLMDHPEIELVYLGGESSVGKSFASLYPHLAHAVKLSIEEVDPEVIARRCEVVFLSMPNGLACQIVPTLLEKGCKVLDLSADYRFRNLTTYTTWYGVERSDRTTADTAIYGLPELYRDRISEAQLVGCPGSYPTASLLALSPLLKQGLIVPETAIVDAKSGTSGGGREAKTYLLLAEADNSLAPYSVVRHRHTPEIEQICSDLAGHEVTVQFTPHLVPIVRGILATVYATLRDPGLVGDDLTTIYTAFYRNSPWVKVCESGIYPQTKWAAGSNLCYIGVEVDPRTGRVIGMSVIDNLIKGQAGQAIQCLNIMMGWDETLGLPKMGFYP</sequence>
<dbReference type="EC" id="1.2.1.38" evidence="1"/>
<dbReference type="EMBL" id="U48355">
    <property type="protein sequence ID" value="AAC36190.1"/>
    <property type="molecule type" value="Genomic_DNA"/>
</dbReference>
<dbReference type="SMR" id="O87890"/>
<dbReference type="UniPathway" id="UPA00068">
    <property type="reaction ID" value="UER00108"/>
</dbReference>
<dbReference type="GO" id="GO:0005737">
    <property type="term" value="C:cytoplasm"/>
    <property type="evidence" value="ECO:0007669"/>
    <property type="project" value="UniProtKB-SubCell"/>
</dbReference>
<dbReference type="GO" id="GO:0003942">
    <property type="term" value="F:N-acetyl-gamma-glutamyl-phosphate reductase activity"/>
    <property type="evidence" value="ECO:0007669"/>
    <property type="project" value="UniProtKB-UniRule"/>
</dbReference>
<dbReference type="GO" id="GO:0051287">
    <property type="term" value="F:NAD binding"/>
    <property type="evidence" value="ECO:0007669"/>
    <property type="project" value="InterPro"/>
</dbReference>
<dbReference type="GO" id="GO:0070401">
    <property type="term" value="F:NADP+ binding"/>
    <property type="evidence" value="ECO:0007669"/>
    <property type="project" value="InterPro"/>
</dbReference>
<dbReference type="GO" id="GO:0006526">
    <property type="term" value="P:L-arginine biosynthetic process"/>
    <property type="evidence" value="ECO:0007669"/>
    <property type="project" value="UniProtKB-UniRule"/>
</dbReference>
<dbReference type="CDD" id="cd23934">
    <property type="entry name" value="AGPR_1_C"/>
    <property type="match status" value="1"/>
</dbReference>
<dbReference type="CDD" id="cd17895">
    <property type="entry name" value="AGPR_1_N"/>
    <property type="match status" value="1"/>
</dbReference>
<dbReference type="FunFam" id="3.30.360.10:FF:000014">
    <property type="entry name" value="N-acetyl-gamma-glutamyl-phosphate reductase"/>
    <property type="match status" value="1"/>
</dbReference>
<dbReference type="Gene3D" id="3.30.360.10">
    <property type="entry name" value="Dihydrodipicolinate Reductase, domain 2"/>
    <property type="match status" value="1"/>
</dbReference>
<dbReference type="Gene3D" id="3.40.50.720">
    <property type="entry name" value="NAD(P)-binding Rossmann-like Domain"/>
    <property type="match status" value="1"/>
</dbReference>
<dbReference type="HAMAP" id="MF_00150">
    <property type="entry name" value="ArgC_type1"/>
    <property type="match status" value="1"/>
</dbReference>
<dbReference type="InterPro" id="IPR000706">
    <property type="entry name" value="AGPR_type-1"/>
</dbReference>
<dbReference type="InterPro" id="IPR036291">
    <property type="entry name" value="NAD(P)-bd_dom_sf"/>
</dbReference>
<dbReference type="InterPro" id="IPR050085">
    <property type="entry name" value="NAGSA_dehydrogenase"/>
</dbReference>
<dbReference type="InterPro" id="IPR000534">
    <property type="entry name" value="Semialdehyde_DH_NAD-bd"/>
</dbReference>
<dbReference type="NCBIfam" id="TIGR01850">
    <property type="entry name" value="argC"/>
    <property type="match status" value="1"/>
</dbReference>
<dbReference type="PANTHER" id="PTHR32338:SF10">
    <property type="entry name" value="N-ACETYL-GAMMA-GLUTAMYL-PHOSPHATE REDUCTASE, CHLOROPLASTIC-RELATED"/>
    <property type="match status" value="1"/>
</dbReference>
<dbReference type="PANTHER" id="PTHR32338">
    <property type="entry name" value="N-ACETYL-GAMMA-GLUTAMYL-PHOSPHATE REDUCTASE, CHLOROPLASTIC-RELATED-RELATED"/>
    <property type="match status" value="1"/>
</dbReference>
<dbReference type="Pfam" id="PF01118">
    <property type="entry name" value="Semialdhyde_dh"/>
    <property type="match status" value="1"/>
</dbReference>
<dbReference type="Pfam" id="PF22698">
    <property type="entry name" value="Semialdhyde_dhC_1"/>
    <property type="match status" value="1"/>
</dbReference>
<dbReference type="SMART" id="SM00859">
    <property type="entry name" value="Semialdhyde_dh"/>
    <property type="match status" value="1"/>
</dbReference>
<dbReference type="SUPFAM" id="SSF55347">
    <property type="entry name" value="Glyceraldehyde-3-phosphate dehydrogenase-like, C-terminal domain"/>
    <property type="match status" value="1"/>
</dbReference>
<dbReference type="SUPFAM" id="SSF51735">
    <property type="entry name" value="NAD(P)-binding Rossmann-fold domains"/>
    <property type="match status" value="1"/>
</dbReference>